<organism>
    <name type="scientific">Saccharomyces cerevisiae (strain Lalvin EC1118 / Prise de mousse)</name>
    <name type="common">Baker's yeast</name>
    <dbReference type="NCBI Taxonomy" id="643680"/>
    <lineage>
        <taxon>Eukaryota</taxon>
        <taxon>Fungi</taxon>
        <taxon>Dikarya</taxon>
        <taxon>Ascomycota</taxon>
        <taxon>Saccharomycotina</taxon>
        <taxon>Saccharomycetes</taxon>
        <taxon>Saccharomycetales</taxon>
        <taxon>Saccharomycetaceae</taxon>
        <taxon>Saccharomyces</taxon>
    </lineage>
</organism>
<sequence>MSYKVNSSYPDSIPPTEQPYMASQYKQDLQSNIAMATNSEQQRQQQQQQQQQQQQWINQPTAENSDLKEKMNCKNTLNEYIFDFLTKSSLKNTAAAFAQDAHLDRDKGQNPIDGPKSKENNGNQNTFSKVVDTPQGFLYEWWQIFWDIFNTSSSRGGSEFAQQYYQLVLQEQRQEQIYRSLAVHAARLQHDAERRGEYSNEDIDPMHLAAMMLGNPMAPAVQMRNVNMNPIPIPMVGNPIVNNFSIPPYNNANPTTGATAVAPTAPPSGDFTNVGPTQNRSQNVTGWPVYNYPMQPTTENPVGNPCNNNTTNNTTNNKSPVNQPKSLKTMHSTDKPNNVPTSKSTRSRSATSKAKGKVKAGLVAKRRRKNNTATVSAGSTNAGSPNITTPGSATSEPAMVGSRVNKTPRSDIATNFRNQAIIFGEEDIYSNSKSSPSLDGASPSALASKQPTKVRKNTKKASTSAFPVESTNKLGGNSVVTGKKRSPPNTRMSRRKSTPSVILNADATKDENNMLRTFSNTIAPNIHSAPPTKTANSLPFPGINLGSFNKPAVSSPLSSVTESCFDPESGKIAGKNGPKRAVNSKVSASSPLSIATPRSGDAQKQRSSKVPGNVVIKPPHGFSTTNLNITLKNSKIITSQNNTVSQELPNGGNILEAQVGNDSRSSKGNRNTLSTPEEKKPSSNNQGYDFDALKNSSSLLFPNQAYASNNRTPNENSNVADETSASTNSGDNDNTLIQPSSNVGTTLGPQQTSTNENQNVHSQNLKFGNIGMVEDQGPDYDLNLLDTNENDFNFINWEG</sequence>
<proteinExistence type="inferred from homology"/>
<gene>
    <name type="primary">FLO8</name>
    <name type="synonym">PDH5</name>
    <name type="ORF">EC1118_1E8_2432g</name>
</gene>
<accession>C8Z7C7</accession>
<name>FLO8_YEAS8</name>
<dbReference type="EMBL" id="FN393067">
    <property type="protein sequence ID" value="CAY79293.1"/>
    <property type="molecule type" value="Genomic_DNA"/>
</dbReference>
<dbReference type="HOGENOM" id="CLU_351656_0_0_1"/>
<dbReference type="OrthoDB" id="41300at4893"/>
<dbReference type="Proteomes" id="UP000000286">
    <property type="component" value="Chromosome V, Scaffold EC1118_1E8"/>
</dbReference>
<dbReference type="GO" id="GO:0005634">
    <property type="term" value="C:nucleus"/>
    <property type="evidence" value="ECO:0007669"/>
    <property type="project" value="UniProtKB-SubCell"/>
</dbReference>
<dbReference type="GO" id="GO:0009889">
    <property type="term" value="P:regulation of biosynthetic process"/>
    <property type="evidence" value="ECO:0007669"/>
    <property type="project" value="UniProtKB-ARBA"/>
</dbReference>
<dbReference type="InterPro" id="IPR006594">
    <property type="entry name" value="LisH"/>
</dbReference>
<dbReference type="PANTHER" id="PTHR45093:SF2">
    <property type="entry name" value="LISH DOMAIN-CONTAINING PROTEIN"/>
    <property type="match status" value="1"/>
</dbReference>
<dbReference type="PANTHER" id="PTHR45093">
    <property type="entry name" value="TRANSCRIPTION ACTIVATOR MSS11"/>
    <property type="match status" value="1"/>
</dbReference>
<dbReference type="SMART" id="SM00667">
    <property type="entry name" value="LisH"/>
    <property type="match status" value="1"/>
</dbReference>
<dbReference type="PROSITE" id="PS50896">
    <property type="entry name" value="LISH"/>
    <property type="match status" value="1"/>
</dbReference>
<evidence type="ECO:0000250" key="1"/>
<evidence type="ECO:0000255" key="2">
    <source>
        <dbReference type="PROSITE-ProRule" id="PRU00126"/>
    </source>
</evidence>
<evidence type="ECO:0000256" key="3">
    <source>
        <dbReference type="SAM" id="MobiDB-lite"/>
    </source>
</evidence>
<evidence type="ECO:0000305" key="4"/>
<comment type="function">
    <text evidence="1">Required for diploid filamentous growth, haploid invasive growth and flocculation. Putative transcriptional activator of FLO1 (By similarity).</text>
</comment>
<comment type="subcellular location">
    <subcellularLocation>
        <location evidence="1">Nucleus</location>
    </subcellularLocation>
</comment>
<comment type="similarity">
    <text evidence="4">Belongs to the FLO8 family.</text>
</comment>
<protein>
    <recommendedName>
        <fullName>Transcriptional activator FLO8</fullName>
    </recommendedName>
    <alternativeName>
        <fullName>Protein PDH5</fullName>
    </alternativeName>
</protein>
<feature type="chain" id="PRO_0000392098" description="Transcriptional activator FLO8">
    <location>
        <begin position="1"/>
        <end position="799"/>
    </location>
</feature>
<feature type="domain" description="LisH" evidence="2">
    <location>
        <begin position="73"/>
        <end position="105"/>
    </location>
</feature>
<feature type="region of interest" description="Disordered" evidence="3">
    <location>
        <begin position="37"/>
        <end position="68"/>
    </location>
</feature>
<feature type="region of interest" description="Disordered" evidence="3">
    <location>
        <begin position="101"/>
        <end position="127"/>
    </location>
</feature>
<feature type="region of interest" description="Disordered" evidence="3">
    <location>
        <begin position="255"/>
        <end position="406"/>
    </location>
</feature>
<feature type="region of interest" description="Disordered" evidence="3">
    <location>
        <begin position="431"/>
        <end position="501"/>
    </location>
</feature>
<feature type="region of interest" description="Disordered" evidence="3">
    <location>
        <begin position="568"/>
        <end position="622"/>
    </location>
</feature>
<feature type="region of interest" description="Disordered" evidence="3">
    <location>
        <begin position="644"/>
        <end position="691"/>
    </location>
</feature>
<feature type="region of interest" description="Disordered" evidence="3">
    <location>
        <begin position="705"/>
        <end position="758"/>
    </location>
</feature>
<feature type="compositionally biased region" description="Low complexity" evidence="3">
    <location>
        <begin position="41"/>
        <end position="55"/>
    </location>
</feature>
<feature type="compositionally biased region" description="Polar residues" evidence="3">
    <location>
        <begin position="270"/>
        <end position="285"/>
    </location>
</feature>
<feature type="compositionally biased region" description="Low complexity" evidence="3">
    <location>
        <begin position="307"/>
        <end position="317"/>
    </location>
</feature>
<feature type="compositionally biased region" description="Polar residues" evidence="3">
    <location>
        <begin position="318"/>
        <end position="340"/>
    </location>
</feature>
<feature type="compositionally biased region" description="Low complexity" evidence="3">
    <location>
        <begin position="341"/>
        <end position="353"/>
    </location>
</feature>
<feature type="compositionally biased region" description="Basic residues" evidence="3">
    <location>
        <begin position="354"/>
        <end position="370"/>
    </location>
</feature>
<feature type="compositionally biased region" description="Polar residues" evidence="3">
    <location>
        <begin position="371"/>
        <end position="395"/>
    </location>
</feature>
<feature type="compositionally biased region" description="Polar residues" evidence="3">
    <location>
        <begin position="460"/>
        <end position="480"/>
    </location>
</feature>
<feature type="compositionally biased region" description="Basic residues" evidence="3">
    <location>
        <begin position="482"/>
        <end position="497"/>
    </location>
</feature>
<feature type="compositionally biased region" description="Polar residues" evidence="3">
    <location>
        <begin position="584"/>
        <end position="593"/>
    </location>
</feature>
<feature type="compositionally biased region" description="Polar residues" evidence="3">
    <location>
        <begin position="660"/>
        <end position="675"/>
    </location>
</feature>
<reference key="1">
    <citation type="journal article" date="2009" name="Proc. Natl. Acad. Sci. U.S.A.">
        <title>Eukaryote-to-eukaryote gene transfer events revealed by the genome sequence of the wine yeast Saccharomyces cerevisiae EC1118.</title>
        <authorList>
            <person name="Novo M."/>
            <person name="Bigey F."/>
            <person name="Beyne E."/>
            <person name="Galeote V."/>
            <person name="Gavory F."/>
            <person name="Mallet S."/>
            <person name="Cambon B."/>
            <person name="Legras J.-L."/>
            <person name="Wincker P."/>
            <person name="Casaregola S."/>
            <person name="Dequin S."/>
        </authorList>
    </citation>
    <scope>NUCLEOTIDE SEQUENCE [LARGE SCALE GENOMIC DNA]</scope>
    <source>
        <strain>Lalvin EC1118 / Prise de mousse</strain>
    </source>
</reference>
<keyword id="KW-0010">Activator</keyword>
<keyword id="KW-0539">Nucleus</keyword>
<keyword id="KW-0804">Transcription</keyword>
<keyword id="KW-0805">Transcription regulation</keyword>